<name>RL2_MAGMM</name>
<feature type="chain" id="PRO_0000309950" description="Large ribosomal subunit protein uL2">
    <location>
        <begin position="1"/>
        <end position="277"/>
    </location>
</feature>
<feature type="region of interest" description="Disordered" evidence="2">
    <location>
        <begin position="227"/>
        <end position="277"/>
    </location>
</feature>
<feature type="compositionally biased region" description="Basic and acidic residues" evidence="2">
    <location>
        <begin position="266"/>
        <end position="277"/>
    </location>
</feature>
<gene>
    <name evidence="1" type="primary">rplB</name>
    <name type="ordered locus">Mmc1_0850</name>
</gene>
<comment type="function">
    <text evidence="1">One of the primary rRNA binding proteins. Required for association of the 30S and 50S subunits to form the 70S ribosome, for tRNA binding and peptide bond formation. It has been suggested to have peptidyltransferase activity; this is somewhat controversial. Makes several contacts with the 16S rRNA in the 70S ribosome.</text>
</comment>
<comment type="subunit">
    <text evidence="1">Part of the 50S ribosomal subunit. Forms a bridge to the 30S subunit in the 70S ribosome.</text>
</comment>
<comment type="similarity">
    <text evidence="1">Belongs to the universal ribosomal protein uL2 family.</text>
</comment>
<proteinExistence type="inferred from homology"/>
<sequence length="277" mass="30623">MALKNFKPTSDGKRHQVAINYSELSNEGPERSLLAPLKRTGGRNNNGRMTVRHQGGGHKRRYRIIDFKRNKFDVPAKVARIEYDPNRTAFIALLHYADGEKSYILAPQRLQVGDTVVSAKTLDNVDVKPGNCMPLRVMPIGTIIHNVELKPGKGGQVARSAGNYIQLMGKEGKYAQLKMPSGEMRLVLLECMATVGMVSNPDNSNTKIGKAGRTRWMGKRPSVRGVVMNPVDHPHGGGEGRTSGGRHPVTPWGVPTKGKKTRSKTKASDRLIMRRRK</sequence>
<accession>A0L5X6</accession>
<organism>
    <name type="scientific">Magnetococcus marinus (strain ATCC BAA-1437 / JCM 17883 / MC-1)</name>
    <dbReference type="NCBI Taxonomy" id="156889"/>
    <lineage>
        <taxon>Bacteria</taxon>
        <taxon>Pseudomonadati</taxon>
        <taxon>Pseudomonadota</taxon>
        <taxon>Alphaproteobacteria</taxon>
        <taxon>Magnetococcales</taxon>
        <taxon>Magnetococcaceae</taxon>
        <taxon>Magnetococcus</taxon>
    </lineage>
</organism>
<protein>
    <recommendedName>
        <fullName evidence="1">Large ribosomal subunit protein uL2</fullName>
    </recommendedName>
    <alternativeName>
        <fullName evidence="3">50S ribosomal protein L2</fullName>
    </alternativeName>
</protein>
<dbReference type="EMBL" id="CP000471">
    <property type="protein sequence ID" value="ABK43369.1"/>
    <property type="molecule type" value="Genomic_DNA"/>
</dbReference>
<dbReference type="RefSeq" id="WP_011712528.1">
    <property type="nucleotide sequence ID" value="NC_008576.1"/>
</dbReference>
<dbReference type="SMR" id="A0L5X6"/>
<dbReference type="STRING" id="156889.Mmc1_0850"/>
<dbReference type="KEGG" id="mgm:Mmc1_0850"/>
<dbReference type="eggNOG" id="COG0090">
    <property type="taxonomic scope" value="Bacteria"/>
</dbReference>
<dbReference type="HOGENOM" id="CLU_036235_2_1_5"/>
<dbReference type="OrthoDB" id="9778722at2"/>
<dbReference type="Proteomes" id="UP000002586">
    <property type="component" value="Chromosome"/>
</dbReference>
<dbReference type="GO" id="GO:0015934">
    <property type="term" value="C:large ribosomal subunit"/>
    <property type="evidence" value="ECO:0007669"/>
    <property type="project" value="InterPro"/>
</dbReference>
<dbReference type="GO" id="GO:0019843">
    <property type="term" value="F:rRNA binding"/>
    <property type="evidence" value="ECO:0007669"/>
    <property type="project" value="UniProtKB-UniRule"/>
</dbReference>
<dbReference type="GO" id="GO:0003735">
    <property type="term" value="F:structural constituent of ribosome"/>
    <property type="evidence" value="ECO:0007669"/>
    <property type="project" value="InterPro"/>
</dbReference>
<dbReference type="GO" id="GO:0016740">
    <property type="term" value="F:transferase activity"/>
    <property type="evidence" value="ECO:0007669"/>
    <property type="project" value="InterPro"/>
</dbReference>
<dbReference type="GO" id="GO:0002181">
    <property type="term" value="P:cytoplasmic translation"/>
    <property type="evidence" value="ECO:0007669"/>
    <property type="project" value="TreeGrafter"/>
</dbReference>
<dbReference type="FunFam" id="2.30.30.30:FF:000001">
    <property type="entry name" value="50S ribosomal protein L2"/>
    <property type="match status" value="1"/>
</dbReference>
<dbReference type="FunFam" id="2.40.50.140:FF:000003">
    <property type="entry name" value="50S ribosomal protein L2"/>
    <property type="match status" value="1"/>
</dbReference>
<dbReference type="FunFam" id="4.10.950.10:FF:000001">
    <property type="entry name" value="50S ribosomal protein L2"/>
    <property type="match status" value="1"/>
</dbReference>
<dbReference type="Gene3D" id="2.30.30.30">
    <property type="match status" value="1"/>
</dbReference>
<dbReference type="Gene3D" id="2.40.50.140">
    <property type="entry name" value="Nucleic acid-binding proteins"/>
    <property type="match status" value="1"/>
</dbReference>
<dbReference type="Gene3D" id="4.10.950.10">
    <property type="entry name" value="Ribosomal protein L2, domain 3"/>
    <property type="match status" value="1"/>
</dbReference>
<dbReference type="HAMAP" id="MF_01320_B">
    <property type="entry name" value="Ribosomal_uL2_B"/>
    <property type="match status" value="1"/>
</dbReference>
<dbReference type="InterPro" id="IPR012340">
    <property type="entry name" value="NA-bd_OB-fold"/>
</dbReference>
<dbReference type="InterPro" id="IPR014722">
    <property type="entry name" value="Rib_uL2_dom2"/>
</dbReference>
<dbReference type="InterPro" id="IPR002171">
    <property type="entry name" value="Ribosomal_uL2"/>
</dbReference>
<dbReference type="InterPro" id="IPR005880">
    <property type="entry name" value="Ribosomal_uL2_bac/org-type"/>
</dbReference>
<dbReference type="InterPro" id="IPR022669">
    <property type="entry name" value="Ribosomal_uL2_C"/>
</dbReference>
<dbReference type="InterPro" id="IPR022671">
    <property type="entry name" value="Ribosomal_uL2_CS"/>
</dbReference>
<dbReference type="InterPro" id="IPR014726">
    <property type="entry name" value="Ribosomal_uL2_dom3"/>
</dbReference>
<dbReference type="InterPro" id="IPR022666">
    <property type="entry name" value="Ribosomal_uL2_RNA-bd_dom"/>
</dbReference>
<dbReference type="InterPro" id="IPR008991">
    <property type="entry name" value="Translation_prot_SH3-like_sf"/>
</dbReference>
<dbReference type="NCBIfam" id="TIGR01171">
    <property type="entry name" value="rplB_bact"/>
    <property type="match status" value="1"/>
</dbReference>
<dbReference type="PANTHER" id="PTHR13691:SF5">
    <property type="entry name" value="LARGE RIBOSOMAL SUBUNIT PROTEIN UL2M"/>
    <property type="match status" value="1"/>
</dbReference>
<dbReference type="PANTHER" id="PTHR13691">
    <property type="entry name" value="RIBOSOMAL PROTEIN L2"/>
    <property type="match status" value="1"/>
</dbReference>
<dbReference type="Pfam" id="PF00181">
    <property type="entry name" value="Ribosomal_L2"/>
    <property type="match status" value="1"/>
</dbReference>
<dbReference type="Pfam" id="PF03947">
    <property type="entry name" value="Ribosomal_L2_C"/>
    <property type="match status" value="1"/>
</dbReference>
<dbReference type="PIRSF" id="PIRSF002158">
    <property type="entry name" value="Ribosomal_L2"/>
    <property type="match status" value="1"/>
</dbReference>
<dbReference type="SMART" id="SM01383">
    <property type="entry name" value="Ribosomal_L2"/>
    <property type="match status" value="1"/>
</dbReference>
<dbReference type="SMART" id="SM01382">
    <property type="entry name" value="Ribosomal_L2_C"/>
    <property type="match status" value="1"/>
</dbReference>
<dbReference type="SUPFAM" id="SSF50249">
    <property type="entry name" value="Nucleic acid-binding proteins"/>
    <property type="match status" value="1"/>
</dbReference>
<dbReference type="SUPFAM" id="SSF50104">
    <property type="entry name" value="Translation proteins SH3-like domain"/>
    <property type="match status" value="1"/>
</dbReference>
<dbReference type="PROSITE" id="PS00467">
    <property type="entry name" value="RIBOSOMAL_L2"/>
    <property type="match status" value="1"/>
</dbReference>
<keyword id="KW-1185">Reference proteome</keyword>
<keyword id="KW-0687">Ribonucleoprotein</keyword>
<keyword id="KW-0689">Ribosomal protein</keyword>
<keyword id="KW-0694">RNA-binding</keyword>
<keyword id="KW-0699">rRNA-binding</keyword>
<evidence type="ECO:0000255" key="1">
    <source>
        <dbReference type="HAMAP-Rule" id="MF_01320"/>
    </source>
</evidence>
<evidence type="ECO:0000256" key="2">
    <source>
        <dbReference type="SAM" id="MobiDB-lite"/>
    </source>
</evidence>
<evidence type="ECO:0000305" key="3"/>
<reference key="1">
    <citation type="journal article" date="2009" name="Appl. Environ. Microbiol.">
        <title>Complete genome sequence of the chemolithoautotrophic marine magnetotactic coccus strain MC-1.</title>
        <authorList>
            <person name="Schubbe S."/>
            <person name="Williams T.J."/>
            <person name="Xie G."/>
            <person name="Kiss H.E."/>
            <person name="Brettin T.S."/>
            <person name="Martinez D."/>
            <person name="Ross C.A."/>
            <person name="Schuler D."/>
            <person name="Cox B.L."/>
            <person name="Nealson K.H."/>
            <person name="Bazylinski D.A."/>
        </authorList>
    </citation>
    <scope>NUCLEOTIDE SEQUENCE [LARGE SCALE GENOMIC DNA]</scope>
    <source>
        <strain>ATCC BAA-1437 / JCM 17883 / MC-1</strain>
    </source>
</reference>